<accession>Q48AW3</accession>
<comment type="function">
    <text evidence="1">F(1)F(0) ATP synthase produces ATP from ADP in the presence of a proton or sodium gradient. F-type ATPases consist of two structural domains, F(1) containing the extramembraneous catalytic core and F(0) containing the membrane proton channel, linked together by a central stalk and a peripheral stalk. During catalysis, ATP synthesis in the catalytic domain of F(1) is coupled via a rotary mechanism of the central stalk subunits to proton translocation.</text>
</comment>
<comment type="function">
    <text evidence="1">This protein is part of the stalk that links CF(0) to CF(1). It either transmits conformational changes from CF(0) to CF(1) or is implicated in proton conduction.</text>
</comment>
<comment type="subunit">
    <text evidence="1">F-type ATPases have 2 components, F(1) - the catalytic core - and F(0) - the membrane proton channel. F(1) has five subunits: alpha(3), beta(3), gamma(1), delta(1), epsilon(1). F(0) has three main subunits: a(1), b(2) and c(10-14). The alpha and beta chains form an alternating ring which encloses part of the gamma chain. F(1) is attached to F(0) by a central stalk formed by the gamma and epsilon chains, while a peripheral stalk is formed by the delta and b chains.</text>
</comment>
<comment type="subcellular location">
    <subcellularLocation>
        <location evidence="1">Cell inner membrane</location>
        <topology evidence="1">Peripheral membrane protein</topology>
    </subcellularLocation>
</comment>
<comment type="similarity">
    <text evidence="1">Belongs to the ATPase delta chain family.</text>
</comment>
<keyword id="KW-0066">ATP synthesis</keyword>
<keyword id="KW-0997">Cell inner membrane</keyword>
<keyword id="KW-1003">Cell membrane</keyword>
<keyword id="KW-0139">CF(1)</keyword>
<keyword id="KW-0375">Hydrogen ion transport</keyword>
<keyword id="KW-0406">Ion transport</keyword>
<keyword id="KW-0472">Membrane</keyword>
<keyword id="KW-0813">Transport</keyword>
<gene>
    <name evidence="1" type="primary">atpH</name>
    <name type="ordered locus">CPS_0059</name>
</gene>
<reference key="1">
    <citation type="journal article" date="2005" name="Proc. Natl. Acad. Sci. U.S.A.">
        <title>The psychrophilic lifestyle as revealed by the genome sequence of Colwellia psychrerythraea 34H through genomic and proteomic analyses.</title>
        <authorList>
            <person name="Methe B.A."/>
            <person name="Nelson K.E."/>
            <person name="Deming J.W."/>
            <person name="Momen B."/>
            <person name="Melamud E."/>
            <person name="Zhang X."/>
            <person name="Moult J."/>
            <person name="Madupu R."/>
            <person name="Nelson W.C."/>
            <person name="Dodson R.J."/>
            <person name="Brinkac L.M."/>
            <person name="Daugherty S.C."/>
            <person name="Durkin A.S."/>
            <person name="DeBoy R.T."/>
            <person name="Kolonay J.F."/>
            <person name="Sullivan S.A."/>
            <person name="Zhou L."/>
            <person name="Davidsen T.M."/>
            <person name="Wu M."/>
            <person name="Huston A.L."/>
            <person name="Lewis M."/>
            <person name="Weaver B."/>
            <person name="Weidman J.F."/>
            <person name="Khouri H."/>
            <person name="Utterback T.R."/>
            <person name="Feldblyum T.V."/>
            <person name="Fraser C.M."/>
        </authorList>
    </citation>
    <scope>NUCLEOTIDE SEQUENCE [LARGE SCALE GENOMIC DNA]</scope>
    <source>
        <strain>34H / ATCC BAA-681</strain>
    </source>
</reference>
<proteinExistence type="inferred from homology"/>
<feature type="chain" id="PRO_0000370954" description="ATP synthase subunit delta">
    <location>
        <begin position="1"/>
        <end position="177"/>
    </location>
</feature>
<dbReference type="EMBL" id="CP000083">
    <property type="protein sequence ID" value="AAZ28273.1"/>
    <property type="molecule type" value="Genomic_DNA"/>
</dbReference>
<dbReference type="RefSeq" id="WP_011040934.1">
    <property type="nucleotide sequence ID" value="NC_003910.7"/>
</dbReference>
<dbReference type="SMR" id="Q48AW3"/>
<dbReference type="STRING" id="167879.CPS_0059"/>
<dbReference type="KEGG" id="cps:CPS_0059"/>
<dbReference type="eggNOG" id="COG0712">
    <property type="taxonomic scope" value="Bacteria"/>
</dbReference>
<dbReference type="HOGENOM" id="CLU_085114_3_0_6"/>
<dbReference type="Proteomes" id="UP000000547">
    <property type="component" value="Chromosome"/>
</dbReference>
<dbReference type="GO" id="GO:0005886">
    <property type="term" value="C:plasma membrane"/>
    <property type="evidence" value="ECO:0007669"/>
    <property type="project" value="UniProtKB-SubCell"/>
</dbReference>
<dbReference type="GO" id="GO:0045259">
    <property type="term" value="C:proton-transporting ATP synthase complex"/>
    <property type="evidence" value="ECO:0007669"/>
    <property type="project" value="UniProtKB-KW"/>
</dbReference>
<dbReference type="GO" id="GO:0046933">
    <property type="term" value="F:proton-transporting ATP synthase activity, rotational mechanism"/>
    <property type="evidence" value="ECO:0007669"/>
    <property type="project" value="UniProtKB-UniRule"/>
</dbReference>
<dbReference type="Gene3D" id="1.10.520.20">
    <property type="entry name" value="N-terminal domain of the delta subunit of the F1F0-ATP synthase"/>
    <property type="match status" value="1"/>
</dbReference>
<dbReference type="HAMAP" id="MF_01416">
    <property type="entry name" value="ATP_synth_delta_bact"/>
    <property type="match status" value="1"/>
</dbReference>
<dbReference type="InterPro" id="IPR026015">
    <property type="entry name" value="ATP_synth_OSCP/delta_N_sf"/>
</dbReference>
<dbReference type="InterPro" id="IPR020781">
    <property type="entry name" value="ATPase_OSCP/d_CS"/>
</dbReference>
<dbReference type="InterPro" id="IPR000711">
    <property type="entry name" value="ATPase_OSCP/dsu"/>
</dbReference>
<dbReference type="NCBIfam" id="TIGR01145">
    <property type="entry name" value="ATP_synt_delta"/>
    <property type="match status" value="1"/>
</dbReference>
<dbReference type="NCBIfam" id="NF004402">
    <property type="entry name" value="PRK05758.2-2"/>
    <property type="match status" value="1"/>
</dbReference>
<dbReference type="NCBIfam" id="NF004404">
    <property type="entry name" value="PRK05758.2-5"/>
    <property type="match status" value="1"/>
</dbReference>
<dbReference type="PANTHER" id="PTHR11910">
    <property type="entry name" value="ATP SYNTHASE DELTA CHAIN"/>
    <property type="match status" value="1"/>
</dbReference>
<dbReference type="Pfam" id="PF00213">
    <property type="entry name" value="OSCP"/>
    <property type="match status" value="1"/>
</dbReference>
<dbReference type="PRINTS" id="PR00125">
    <property type="entry name" value="ATPASEDELTA"/>
</dbReference>
<dbReference type="SUPFAM" id="SSF47928">
    <property type="entry name" value="N-terminal domain of the delta subunit of the F1F0-ATP synthase"/>
    <property type="match status" value="1"/>
</dbReference>
<dbReference type="PROSITE" id="PS00389">
    <property type="entry name" value="ATPASE_DELTA"/>
    <property type="match status" value="1"/>
</dbReference>
<organism>
    <name type="scientific">Colwellia psychrerythraea (strain 34H / ATCC BAA-681)</name>
    <name type="common">Vibrio psychroerythus</name>
    <dbReference type="NCBI Taxonomy" id="167879"/>
    <lineage>
        <taxon>Bacteria</taxon>
        <taxon>Pseudomonadati</taxon>
        <taxon>Pseudomonadota</taxon>
        <taxon>Gammaproteobacteria</taxon>
        <taxon>Alteromonadales</taxon>
        <taxon>Colwelliaceae</taxon>
        <taxon>Colwellia</taxon>
    </lineage>
</organism>
<evidence type="ECO:0000255" key="1">
    <source>
        <dbReference type="HAMAP-Rule" id="MF_01416"/>
    </source>
</evidence>
<sequence>MSELTTVARPYAKAAFEFAVEAKAIDSWLVQLTFAAEVAKDETIKGFLSSGASVEQAQTLFLNVCGEQVDSQGQNFLKVMAINERLLVLPQVLEQFIALKADFDQEVSVDVTSAVEVTAEQKTTLSAALEKRLARKVKLNCFVDASIVSGLVIKAGDMVIDGSIKGKLNRLATTLQS</sequence>
<name>ATPD_COLP3</name>
<protein>
    <recommendedName>
        <fullName evidence="1">ATP synthase subunit delta</fullName>
    </recommendedName>
    <alternativeName>
        <fullName evidence="1">ATP synthase F(1) sector subunit delta</fullName>
    </alternativeName>
    <alternativeName>
        <fullName evidence="1">F-type ATPase subunit delta</fullName>
        <shortName evidence="1">F-ATPase subunit delta</shortName>
    </alternativeName>
</protein>